<evidence type="ECO:0000250" key="1">
    <source>
        <dbReference type="UniProtKB" id="Q9Z0Y9"/>
    </source>
</evidence>
<evidence type="ECO:0000255" key="2">
    <source>
        <dbReference type="PROSITE-ProRule" id="PRU00407"/>
    </source>
</evidence>
<evidence type="ECO:0000255" key="3">
    <source>
        <dbReference type="PROSITE-ProRule" id="PRU01189"/>
    </source>
</evidence>
<evidence type="ECO:0000256" key="4">
    <source>
        <dbReference type="SAM" id="MobiDB-lite"/>
    </source>
</evidence>
<evidence type="ECO:0000269" key="5">
    <source>
    </source>
</evidence>
<evidence type="ECO:0000269" key="6">
    <source>
    </source>
</evidence>
<evidence type="ECO:0000269" key="7">
    <source>
    </source>
</evidence>
<evidence type="ECO:0000303" key="8">
    <source>
    </source>
</evidence>
<evidence type="ECO:0000305" key="9"/>
<evidence type="ECO:0007829" key="10">
    <source>
        <dbReference type="PDB" id="1UHL"/>
    </source>
</evidence>
<evidence type="ECO:0007829" key="11">
    <source>
        <dbReference type="PDB" id="3IPU"/>
    </source>
</evidence>
<evidence type="ECO:0007829" key="12">
    <source>
        <dbReference type="PDB" id="5HJS"/>
    </source>
</evidence>
<reference key="1">
    <citation type="journal article" date="1995" name="Genes Dev.">
        <title>LXR, a nuclear receptor that defines a distinct retinoid response pathway.</title>
        <authorList>
            <person name="Willy P.J."/>
            <person name="Umesono K."/>
            <person name="Ong E.S."/>
            <person name="Evans R.M."/>
            <person name="Heyman R.A."/>
            <person name="Mangelsdorf D.J."/>
        </authorList>
    </citation>
    <scope>NUCLEOTIDE SEQUENCE [MRNA] (ISOFORM 1)</scope>
    <source>
        <tissue>Liver</tissue>
    </source>
</reference>
<reference key="2">
    <citation type="journal article" date="2004" name="Nat. Genet.">
        <title>Complete sequencing and characterization of 21,243 full-length human cDNAs.</title>
        <authorList>
            <person name="Ota T."/>
            <person name="Suzuki Y."/>
            <person name="Nishikawa T."/>
            <person name="Otsuki T."/>
            <person name="Sugiyama T."/>
            <person name="Irie R."/>
            <person name="Wakamatsu A."/>
            <person name="Hayashi K."/>
            <person name="Sato H."/>
            <person name="Nagai K."/>
            <person name="Kimura K."/>
            <person name="Makita H."/>
            <person name="Sekine M."/>
            <person name="Obayashi M."/>
            <person name="Nishi T."/>
            <person name="Shibahara T."/>
            <person name="Tanaka T."/>
            <person name="Ishii S."/>
            <person name="Yamamoto J."/>
            <person name="Saito K."/>
            <person name="Kawai Y."/>
            <person name="Isono Y."/>
            <person name="Nakamura Y."/>
            <person name="Nagahari K."/>
            <person name="Murakami K."/>
            <person name="Yasuda T."/>
            <person name="Iwayanagi T."/>
            <person name="Wagatsuma M."/>
            <person name="Shiratori A."/>
            <person name="Sudo H."/>
            <person name="Hosoiri T."/>
            <person name="Kaku Y."/>
            <person name="Kodaira H."/>
            <person name="Kondo H."/>
            <person name="Sugawara M."/>
            <person name="Takahashi M."/>
            <person name="Kanda K."/>
            <person name="Yokoi T."/>
            <person name="Furuya T."/>
            <person name="Kikkawa E."/>
            <person name="Omura Y."/>
            <person name="Abe K."/>
            <person name="Kamihara K."/>
            <person name="Katsuta N."/>
            <person name="Sato K."/>
            <person name="Tanikawa M."/>
            <person name="Yamazaki M."/>
            <person name="Ninomiya K."/>
            <person name="Ishibashi T."/>
            <person name="Yamashita H."/>
            <person name="Murakawa K."/>
            <person name="Fujimori K."/>
            <person name="Tanai H."/>
            <person name="Kimata M."/>
            <person name="Watanabe M."/>
            <person name="Hiraoka S."/>
            <person name="Chiba Y."/>
            <person name="Ishida S."/>
            <person name="Ono Y."/>
            <person name="Takiguchi S."/>
            <person name="Watanabe S."/>
            <person name="Yosida M."/>
            <person name="Hotuta T."/>
            <person name="Kusano J."/>
            <person name="Kanehori K."/>
            <person name="Takahashi-Fujii A."/>
            <person name="Hara H."/>
            <person name="Tanase T.-O."/>
            <person name="Nomura Y."/>
            <person name="Togiya S."/>
            <person name="Komai F."/>
            <person name="Hara R."/>
            <person name="Takeuchi K."/>
            <person name="Arita M."/>
            <person name="Imose N."/>
            <person name="Musashino K."/>
            <person name="Yuuki H."/>
            <person name="Oshima A."/>
            <person name="Sasaki N."/>
            <person name="Aotsuka S."/>
            <person name="Yoshikawa Y."/>
            <person name="Matsunawa H."/>
            <person name="Ichihara T."/>
            <person name="Shiohata N."/>
            <person name="Sano S."/>
            <person name="Moriya S."/>
            <person name="Momiyama H."/>
            <person name="Satoh N."/>
            <person name="Takami S."/>
            <person name="Terashima Y."/>
            <person name="Suzuki O."/>
            <person name="Nakagawa S."/>
            <person name="Senoh A."/>
            <person name="Mizoguchi H."/>
            <person name="Goto Y."/>
            <person name="Shimizu F."/>
            <person name="Wakebe H."/>
            <person name="Hishigaki H."/>
            <person name="Watanabe T."/>
            <person name="Sugiyama A."/>
            <person name="Takemoto M."/>
            <person name="Kawakami B."/>
            <person name="Yamazaki M."/>
            <person name="Watanabe K."/>
            <person name="Kumagai A."/>
            <person name="Itakura S."/>
            <person name="Fukuzumi Y."/>
            <person name="Fujimori Y."/>
            <person name="Komiyama M."/>
            <person name="Tashiro H."/>
            <person name="Tanigami A."/>
            <person name="Fujiwara T."/>
            <person name="Ono T."/>
            <person name="Yamada K."/>
            <person name="Fujii Y."/>
            <person name="Ozaki K."/>
            <person name="Hirao M."/>
            <person name="Ohmori Y."/>
            <person name="Kawabata A."/>
            <person name="Hikiji T."/>
            <person name="Kobatake N."/>
            <person name="Inagaki H."/>
            <person name="Ikema Y."/>
            <person name="Okamoto S."/>
            <person name="Okitani R."/>
            <person name="Kawakami T."/>
            <person name="Noguchi S."/>
            <person name="Itoh T."/>
            <person name="Shigeta K."/>
            <person name="Senba T."/>
            <person name="Matsumura K."/>
            <person name="Nakajima Y."/>
            <person name="Mizuno T."/>
            <person name="Morinaga M."/>
            <person name="Sasaki M."/>
            <person name="Togashi T."/>
            <person name="Oyama M."/>
            <person name="Hata H."/>
            <person name="Watanabe M."/>
            <person name="Komatsu T."/>
            <person name="Mizushima-Sugano J."/>
            <person name="Satoh T."/>
            <person name="Shirai Y."/>
            <person name="Takahashi Y."/>
            <person name="Nakagawa K."/>
            <person name="Okumura K."/>
            <person name="Nagase T."/>
            <person name="Nomura N."/>
            <person name="Kikuchi H."/>
            <person name="Masuho Y."/>
            <person name="Yamashita R."/>
            <person name="Nakai K."/>
            <person name="Yada T."/>
            <person name="Nakamura Y."/>
            <person name="Ohara O."/>
            <person name="Isogai T."/>
            <person name="Sugano S."/>
        </authorList>
    </citation>
    <scope>NUCLEOTIDE SEQUENCE [LARGE SCALE MRNA] (ISOFORM 1)</scope>
    <source>
        <tissue>Heart</tissue>
    </source>
</reference>
<reference key="3">
    <citation type="journal article" date="2006" name="Nature">
        <title>Human chromosome 11 DNA sequence and analysis including novel gene identification.</title>
        <authorList>
            <person name="Taylor T.D."/>
            <person name="Noguchi H."/>
            <person name="Totoki Y."/>
            <person name="Toyoda A."/>
            <person name="Kuroki Y."/>
            <person name="Dewar K."/>
            <person name="Lloyd C."/>
            <person name="Itoh T."/>
            <person name="Takeda T."/>
            <person name="Kim D.-W."/>
            <person name="She X."/>
            <person name="Barlow K.F."/>
            <person name="Bloom T."/>
            <person name="Bruford E."/>
            <person name="Chang J.L."/>
            <person name="Cuomo C.A."/>
            <person name="Eichler E."/>
            <person name="FitzGerald M.G."/>
            <person name="Jaffe D.B."/>
            <person name="LaButti K."/>
            <person name="Nicol R."/>
            <person name="Park H.-S."/>
            <person name="Seaman C."/>
            <person name="Sougnez C."/>
            <person name="Yang X."/>
            <person name="Zimmer A.R."/>
            <person name="Zody M.C."/>
            <person name="Birren B.W."/>
            <person name="Nusbaum C."/>
            <person name="Fujiyama A."/>
            <person name="Hattori M."/>
            <person name="Rogers J."/>
            <person name="Lander E.S."/>
            <person name="Sakaki Y."/>
        </authorList>
    </citation>
    <scope>NUCLEOTIDE SEQUENCE [LARGE SCALE GENOMIC DNA]</scope>
</reference>
<reference key="4">
    <citation type="submission" date="2005-09" db="EMBL/GenBank/DDBJ databases">
        <authorList>
            <person name="Mural R.J."/>
            <person name="Istrail S."/>
            <person name="Sutton G.G."/>
            <person name="Florea L."/>
            <person name="Halpern A.L."/>
            <person name="Mobarry C.M."/>
            <person name="Lippert R."/>
            <person name="Walenz B."/>
            <person name="Shatkay H."/>
            <person name="Dew I."/>
            <person name="Miller J.R."/>
            <person name="Flanigan M.J."/>
            <person name="Edwards N.J."/>
            <person name="Bolanos R."/>
            <person name="Fasulo D."/>
            <person name="Halldorsson B.V."/>
            <person name="Hannenhalli S."/>
            <person name="Turner R."/>
            <person name="Yooseph S."/>
            <person name="Lu F."/>
            <person name="Nusskern D.R."/>
            <person name="Shue B.C."/>
            <person name="Zheng X.H."/>
            <person name="Zhong F."/>
            <person name="Delcher A.L."/>
            <person name="Huson D.H."/>
            <person name="Kravitz S.A."/>
            <person name="Mouchard L."/>
            <person name="Reinert K."/>
            <person name="Remington K.A."/>
            <person name="Clark A.G."/>
            <person name="Waterman M.S."/>
            <person name="Eichler E.E."/>
            <person name="Adams M.D."/>
            <person name="Hunkapiller M.W."/>
            <person name="Myers E.W."/>
            <person name="Venter J.C."/>
        </authorList>
    </citation>
    <scope>NUCLEOTIDE SEQUENCE [LARGE SCALE GENOMIC DNA]</scope>
</reference>
<reference key="5">
    <citation type="journal article" date="2004" name="Genome Res.">
        <title>The status, quality, and expansion of the NIH full-length cDNA project: the Mammalian Gene Collection (MGC).</title>
        <authorList>
            <consortium name="The MGC Project Team"/>
        </authorList>
    </citation>
    <scope>NUCLEOTIDE SEQUENCE [LARGE SCALE MRNA] (ISOFORMS 2 AND 3)</scope>
    <source>
        <tissue>Brain</tissue>
        <tissue>Placenta</tissue>
    </source>
</reference>
<reference key="6">
    <citation type="journal article" date="2009" name="Mol. Cell">
        <title>GPS2 is required for cholesterol efflux by triggering histone demethylation, LXR recruitment, and coregulator assembly at the ABCG1 locus.</title>
        <authorList>
            <person name="Jakobsson T."/>
            <person name="Venteclef N."/>
            <person name="Toresson G."/>
            <person name="Damdimopoulos A.E."/>
            <person name="Ehrlund A."/>
            <person name="Lou X."/>
            <person name="Sanyal S."/>
            <person name="Steffensen K.R."/>
            <person name="Gustafsson J.A."/>
            <person name="Treuter E."/>
        </authorList>
    </citation>
    <scope>FUNCTION</scope>
    <scope>INTERACTION WITH GPS2 AND NCOA2</scope>
    <scope>MUTAGENESIS OF 268-ILE--LYS-273 AND 438-LEU-LEU-439</scope>
</reference>
<reference key="7">
    <citation type="journal article" date="2015" name="J. Steroid Biochem. Mol. Biol.">
        <title>CCAR2 negatively regulates nuclear receptor LXRalpha by competing with SIRT1 deacetylase.</title>
        <authorList>
            <person name="Sakurabashi A."/>
            <person name="Wada-Hiraike O."/>
            <person name="Hirano M."/>
            <person name="Fu H."/>
            <person name="Isono W."/>
            <person name="Fukuda T."/>
            <person name="Morita Y."/>
            <person name="Tanikawa M."/>
            <person name="Miyamoto Y."/>
            <person name="Oda K."/>
            <person name="Kawana K."/>
            <person name="Osuga Y."/>
            <person name="Fujii T."/>
        </authorList>
    </citation>
    <scope>FUNCTION</scope>
    <scope>INTERACTION WITH SIRT1 AND CCAR2</scope>
    <scope>SUBCELLULAR LOCATION</scope>
</reference>
<reference key="8">
    <citation type="journal article" date="2023" name="Mol. Cell">
        <title>UBR5 forms ligand-dependent complexes on chromatin to regulate nuclear hormone receptor stability.</title>
        <authorList>
            <person name="Tsai J.M."/>
            <person name="Aguirre J.D."/>
            <person name="Li Y.D."/>
            <person name="Brown J."/>
            <person name="Focht V."/>
            <person name="Kater L."/>
            <person name="Kempf G."/>
            <person name="Sandoval B."/>
            <person name="Schmitt S."/>
            <person name="Rutter J.C."/>
            <person name="Galli P."/>
            <person name="Sandate C.R."/>
            <person name="Cutler J.A."/>
            <person name="Zou C."/>
            <person name="Donovan K.A."/>
            <person name="Lumpkin R.J."/>
            <person name="Cavadini S."/>
            <person name="Park P.M.C."/>
            <person name="Sievers Q."/>
            <person name="Hatton C."/>
            <person name="Ener E."/>
            <person name="Regalado B.D."/>
            <person name="Sperling M.T."/>
            <person name="Slabicki M."/>
            <person name="Kim J."/>
            <person name="Zon R."/>
            <person name="Zhang Z."/>
            <person name="Miller P.G."/>
            <person name="Belizaire R."/>
            <person name="Sperling A.S."/>
            <person name="Fischer E.S."/>
            <person name="Irizarry R."/>
            <person name="Armstrong S.A."/>
            <person name="Thomae N.H."/>
            <person name="Ebert B.L."/>
        </authorList>
    </citation>
    <scope>FUNCTION</scope>
    <scope>UBIQUITINATION</scope>
</reference>
<dbReference type="EMBL" id="U22662">
    <property type="protein sequence ID" value="AAA85856.1"/>
    <property type="molecule type" value="mRNA"/>
</dbReference>
<dbReference type="EMBL" id="AK290614">
    <property type="protein sequence ID" value="BAF83303.1"/>
    <property type="molecule type" value="mRNA"/>
</dbReference>
<dbReference type="EMBL" id="AC018410">
    <property type="status" value="NOT_ANNOTATED_CDS"/>
    <property type="molecule type" value="Genomic_DNA"/>
</dbReference>
<dbReference type="EMBL" id="CH471064">
    <property type="protein sequence ID" value="EAW67949.1"/>
    <property type="molecule type" value="Genomic_DNA"/>
</dbReference>
<dbReference type="EMBL" id="CH471064">
    <property type="protein sequence ID" value="EAW67942.1"/>
    <property type="molecule type" value="Genomic_DNA"/>
</dbReference>
<dbReference type="EMBL" id="CH471064">
    <property type="protein sequence ID" value="EAW67943.1"/>
    <property type="molecule type" value="Genomic_DNA"/>
</dbReference>
<dbReference type="EMBL" id="CH471064">
    <property type="protein sequence ID" value="EAW67944.1"/>
    <property type="molecule type" value="Genomic_DNA"/>
</dbReference>
<dbReference type="EMBL" id="CH471064">
    <property type="protein sequence ID" value="EAW67947.1"/>
    <property type="molecule type" value="Genomic_DNA"/>
</dbReference>
<dbReference type="EMBL" id="CH471064">
    <property type="protein sequence ID" value="EAW67948.1"/>
    <property type="molecule type" value="Genomic_DNA"/>
</dbReference>
<dbReference type="EMBL" id="BC008819">
    <property type="protein sequence ID" value="AAH08819.1"/>
    <property type="molecule type" value="mRNA"/>
</dbReference>
<dbReference type="EMBL" id="BC041172">
    <property type="protein sequence ID" value="AAH41172.1"/>
    <property type="molecule type" value="mRNA"/>
</dbReference>
<dbReference type="CCDS" id="CCDS44584.1">
    <molecule id="Q13133-2"/>
</dbReference>
<dbReference type="CCDS" id="CCDS44585.1">
    <molecule id="Q13133-3"/>
</dbReference>
<dbReference type="CCDS" id="CCDS7929.1">
    <molecule id="Q13133-1"/>
</dbReference>
<dbReference type="PIR" id="I38975">
    <property type="entry name" value="I38975"/>
</dbReference>
<dbReference type="RefSeq" id="NP_001123573.1">
    <molecule id="Q13133-2"/>
    <property type="nucleotide sequence ID" value="NM_001130101.3"/>
</dbReference>
<dbReference type="RefSeq" id="NP_001123574.1">
    <molecule id="Q13133-3"/>
    <property type="nucleotide sequence ID" value="NM_001130102.3"/>
</dbReference>
<dbReference type="RefSeq" id="NP_005684.2">
    <molecule id="Q13133-1"/>
    <property type="nucleotide sequence ID" value="NM_005693.4"/>
</dbReference>
<dbReference type="RefSeq" id="XP_005252762.1">
    <property type="nucleotide sequence ID" value="XM_005252705.1"/>
</dbReference>
<dbReference type="RefSeq" id="XP_005252763.1">
    <molecule id="Q13133-1"/>
    <property type="nucleotide sequence ID" value="XM_005252706.2"/>
</dbReference>
<dbReference type="RefSeq" id="XP_005252764.1">
    <property type="nucleotide sequence ID" value="XM_005252707.4"/>
</dbReference>
<dbReference type="RefSeq" id="XP_005252766.1">
    <property type="nucleotide sequence ID" value="XM_005252709.1"/>
</dbReference>
<dbReference type="RefSeq" id="XP_005252767.1">
    <property type="nucleotide sequence ID" value="XM_005252710.1"/>
</dbReference>
<dbReference type="RefSeq" id="XP_005252770.1">
    <property type="nucleotide sequence ID" value="XM_005252713.3"/>
</dbReference>
<dbReference type="RefSeq" id="XP_006718175.1">
    <property type="nucleotide sequence ID" value="XM_006718112.1"/>
</dbReference>
<dbReference type="RefSeq" id="XP_006718176.1">
    <property type="nucleotide sequence ID" value="XM_006718113.1"/>
</dbReference>
<dbReference type="RefSeq" id="XP_006718178.1">
    <property type="nucleotide sequence ID" value="XM_006718115.1"/>
</dbReference>
<dbReference type="RefSeq" id="XP_006718179.1">
    <property type="nucleotide sequence ID" value="XM_006718116.1"/>
</dbReference>
<dbReference type="RefSeq" id="XP_011518107.1">
    <molecule id="Q13133-1"/>
    <property type="nucleotide sequence ID" value="XM_011519805.3"/>
</dbReference>
<dbReference type="RefSeq" id="XP_016872547.1">
    <property type="nucleotide sequence ID" value="XM_017017058.1"/>
</dbReference>
<dbReference type="RefSeq" id="XP_024304066.1">
    <molecule id="Q13133-3"/>
    <property type="nucleotide sequence ID" value="XM_024448298.2"/>
</dbReference>
<dbReference type="RefSeq" id="XP_047282149.1">
    <molecule id="Q13133-3"/>
    <property type="nucleotide sequence ID" value="XM_047426193.1"/>
</dbReference>
<dbReference type="RefSeq" id="XP_047282150.1">
    <molecule id="Q13133-1"/>
    <property type="nucleotide sequence ID" value="XM_047426194.1"/>
</dbReference>
<dbReference type="RefSeq" id="XP_047282151.1">
    <molecule id="Q13133-1"/>
    <property type="nucleotide sequence ID" value="XM_047426195.1"/>
</dbReference>
<dbReference type="RefSeq" id="XP_047282153.1">
    <molecule id="Q13133-3"/>
    <property type="nucleotide sequence ID" value="XM_047426197.1"/>
</dbReference>
<dbReference type="RefSeq" id="XP_047282154.1">
    <molecule id="Q13133-3"/>
    <property type="nucleotide sequence ID" value="XM_047426198.1"/>
</dbReference>
<dbReference type="RefSeq" id="XP_047282155.1">
    <molecule id="Q13133-3"/>
    <property type="nucleotide sequence ID" value="XM_047426199.1"/>
</dbReference>
<dbReference type="RefSeq" id="XP_047282156.1">
    <molecule id="Q13133-2"/>
    <property type="nucleotide sequence ID" value="XM_047426200.1"/>
</dbReference>
<dbReference type="RefSeq" id="XP_047282157.1">
    <molecule id="Q13133-3"/>
    <property type="nucleotide sequence ID" value="XM_047426201.1"/>
</dbReference>
<dbReference type="RefSeq" id="XP_054223344.1">
    <molecule id="Q13133-3"/>
    <property type="nucleotide sequence ID" value="XM_054367369.1"/>
</dbReference>
<dbReference type="RefSeq" id="XP_054223345.1">
    <molecule id="Q13133-1"/>
    <property type="nucleotide sequence ID" value="XM_054367370.1"/>
</dbReference>
<dbReference type="RefSeq" id="XP_054223346.1">
    <molecule id="Q13133-1"/>
    <property type="nucleotide sequence ID" value="XM_054367371.1"/>
</dbReference>
<dbReference type="RefSeq" id="XP_054223347.1">
    <molecule id="Q13133-1"/>
    <property type="nucleotide sequence ID" value="XM_054367372.1"/>
</dbReference>
<dbReference type="RefSeq" id="XP_054223350.1">
    <molecule id="Q13133-3"/>
    <property type="nucleotide sequence ID" value="XM_054367375.1"/>
</dbReference>
<dbReference type="RefSeq" id="XP_054223351.1">
    <molecule id="Q13133-3"/>
    <property type="nucleotide sequence ID" value="XM_054367376.1"/>
</dbReference>
<dbReference type="RefSeq" id="XP_054223352.1">
    <molecule id="Q13133-3"/>
    <property type="nucleotide sequence ID" value="XM_054367377.1"/>
</dbReference>
<dbReference type="RefSeq" id="XP_054223353.1">
    <molecule id="Q13133-3"/>
    <property type="nucleotide sequence ID" value="XM_054367378.1"/>
</dbReference>
<dbReference type="RefSeq" id="XP_054223355.1">
    <molecule id="Q13133-2"/>
    <property type="nucleotide sequence ID" value="XM_054367380.1"/>
</dbReference>
<dbReference type="RefSeq" id="XP_054223356.1">
    <molecule id="Q13133-3"/>
    <property type="nucleotide sequence ID" value="XM_054367381.1"/>
</dbReference>
<dbReference type="RefSeq" id="XP_054223357.1">
    <molecule id="Q13133-3"/>
    <property type="nucleotide sequence ID" value="XM_054367382.1"/>
</dbReference>
<dbReference type="PDB" id="1UHL">
    <property type="method" value="X-ray"/>
    <property type="resolution" value="2.90 A"/>
    <property type="chains" value="B=207-447"/>
</dbReference>
<dbReference type="PDB" id="3IPQ">
    <property type="method" value="X-ray"/>
    <property type="resolution" value="2.00 A"/>
    <property type="chains" value="A=182-447"/>
</dbReference>
<dbReference type="PDB" id="3IPS">
    <property type="method" value="X-ray"/>
    <property type="resolution" value="2.26 A"/>
    <property type="chains" value="A/B=182-447"/>
</dbReference>
<dbReference type="PDB" id="3IPU">
    <property type="method" value="X-ray"/>
    <property type="resolution" value="2.40 A"/>
    <property type="chains" value="A/B=182-447"/>
</dbReference>
<dbReference type="PDB" id="5AVI">
    <property type="method" value="X-ray"/>
    <property type="resolution" value="2.70 A"/>
    <property type="chains" value="A/C=182-447"/>
</dbReference>
<dbReference type="PDB" id="5AVL">
    <property type="method" value="X-ray"/>
    <property type="resolution" value="2.80 A"/>
    <property type="chains" value="A=182-447"/>
</dbReference>
<dbReference type="PDB" id="5HJS">
    <property type="method" value="X-ray"/>
    <property type="resolution" value="1.72 A"/>
    <property type="chains" value="A/B=182-447"/>
</dbReference>
<dbReference type="PDBsum" id="1UHL"/>
<dbReference type="PDBsum" id="3IPQ"/>
<dbReference type="PDBsum" id="3IPS"/>
<dbReference type="PDBsum" id="3IPU"/>
<dbReference type="PDBsum" id="5AVI"/>
<dbReference type="PDBsum" id="5AVL"/>
<dbReference type="PDBsum" id="5HJS"/>
<dbReference type="SMR" id="Q13133"/>
<dbReference type="BioGRID" id="115373">
    <property type="interactions" value="55"/>
</dbReference>
<dbReference type="ComplexPortal" id="CPX-632">
    <property type="entry name" value="RXRalpha-LXRalpha nuclear hormone receptor complex"/>
</dbReference>
<dbReference type="ComplexPortal" id="CPX-716">
    <property type="entry name" value="RXRbeta-LXRalpha nuclear hormone receptor complex"/>
</dbReference>
<dbReference type="CORUM" id="Q13133"/>
<dbReference type="FunCoup" id="Q13133">
    <property type="interactions" value="1231"/>
</dbReference>
<dbReference type="IntAct" id="Q13133">
    <property type="interactions" value="42"/>
</dbReference>
<dbReference type="MINT" id="Q13133"/>
<dbReference type="STRING" id="9606.ENSP00000477707"/>
<dbReference type="BindingDB" id="Q13133"/>
<dbReference type="ChEMBL" id="CHEMBL2808"/>
<dbReference type="DrugBank" id="DB08175">
    <property type="generic name" value="(2E,4E)-11-METHOXY-3,7,11-TRIMETHYLDODECA-2,4-DIENOIC ACID"/>
</dbReference>
<dbReference type="DrugBank" id="DB08063">
    <property type="generic name" value="1-BENZYL-3-(4-METHOXYPHENYLAMINO)-4-PHENYLPYRROLE-2,5-DIONE"/>
</dbReference>
<dbReference type="DrugBank" id="DB11994">
    <property type="generic name" value="Diacerein"/>
</dbReference>
<dbReference type="DrugBank" id="DB03791">
    <property type="generic name" value="GW-3965"/>
</dbReference>
<dbReference type="DrugBank" id="DB07929">
    <property type="generic name" value="N-(TERT-BUTYL)-3,5-DIMETHYL-N'-[(5-METHYL-2,3-DIHYDRO-1,4-BENZODIOXIN-6-YL)CARBONYL]BENZOHYDRAZIDE"/>
</dbReference>
<dbReference type="DrugBank" id="DB13174">
    <property type="generic name" value="Rhein"/>
</dbReference>
<dbReference type="DrugBank" id="DB07080">
    <property type="generic name" value="TO-901317"/>
</dbReference>
<dbReference type="DrugCentral" id="Q13133"/>
<dbReference type="GuidetoPHARMACOLOGY" id="602"/>
<dbReference type="SwissLipids" id="SLP:000000836"/>
<dbReference type="TCDB" id="9.B.208.1.7">
    <property type="family name" value="the vitamin d3 receptor (vdr) family"/>
</dbReference>
<dbReference type="GlyCosmos" id="Q13133">
    <property type="glycosylation" value="1 site, 1 glycan"/>
</dbReference>
<dbReference type="GlyGen" id="Q13133">
    <property type="glycosylation" value="1 site, 1 O-linked glycan (1 site)"/>
</dbReference>
<dbReference type="iPTMnet" id="Q13133"/>
<dbReference type="PhosphoSitePlus" id="Q13133"/>
<dbReference type="BioMuta" id="NR1H3"/>
<dbReference type="DMDM" id="23503089"/>
<dbReference type="jPOST" id="Q13133"/>
<dbReference type="MassIVE" id="Q13133"/>
<dbReference type="PaxDb" id="9606-ENSP00000477707"/>
<dbReference type="PeptideAtlas" id="Q13133"/>
<dbReference type="ProteomicsDB" id="59182">
    <molecule id="Q13133-1"/>
</dbReference>
<dbReference type="ProteomicsDB" id="59183">
    <molecule id="Q13133-2"/>
</dbReference>
<dbReference type="ProteomicsDB" id="70795"/>
<dbReference type="Pumba" id="Q13133"/>
<dbReference type="Antibodypedia" id="13611">
    <property type="antibodies" value="576 antibodies from 39 providers"/>
</dbReference>
<dbReference type="DNASU" id="10062"/>
<dbReference type="Ensembl" id="ENST00000395397.7">
    <molecule id="Q13133-3"/>
    <property type="protein sequence ID" value="ENSP00000378793.3"/>
    <property type="gene ID" value="ENSG00000025434.19"/>
</dbReference>
<dbReference type="Ensembl" id="ENST00000405853.7">
    <molecule id="Q13133-2"/>
    <property type="protein sequence ID" value="ENSP00000384745.3"/>
    <property type="gene ID" value="ENSG00000025434.19"/>
</dbReference>
<dbReference type="Ensembl" id="ENST00000407404.5">
    <molecule id="Q13133-2"/>
    <property type="protein sequence ID" value="ENSP00000385801.1"/>
    <property type="gene ID" value="ENSG00000025434.19"/>
</dbReference>
<dbReference type="Ensembl" id="ENST00000441012.7">
    <molecule id="Q13133-1"/>
    <property type="protein sequence ID" value="ENSP00000387946.2"/>
    <property type="gene ID" value="ENSG00000025434.19"/>
</dbReference>
<dbReference type="Ensembl" id="ENST00000467728.5">
    <molecule id="Q13133-1"/>
    <property type="protein sequence ID" value="ENSP00000420656.1"/>
    <property type="gene ID" value="ENSG00000025434.19"/>
</dbReference>
<dbReference type="GeneID" id="10062"/>
<dbReference type="KEGG" id="hsa:10062"/>
<dbReference type="MANE-Select" id="ENST00000441012.7">
    <property type="protein sequence ID" value="ENSP00000387946.2"/>
    <property type="RefSeq nucleotide sequence ID" value="NM_005693.4"/>
    <property type="RefSeq protein sequence ID" value="NP_005684.2"/>
</dbReference>
<dbReference type="UCSC" id="uc001nek.4">
    <molecule id="Q13133-1"/>
    <property type="organism name" value="human"/>
</dbReference>
<dbReference type="AGR" id="HGNC:7966"/>
<dbReference type="CTD" id="10062"/>
<dbReference type="DisGeNET" id="10062"/>
<dbReference type="GeneCards" id="NR1H3"/>
<dbReference type="HGNC" id="HGNC:7966">
    <property type="gene designation" value="NR1H3"/>
</dbReference>
<dbReference type="HPA" id="ENSG00000025434">
    <property type="expression patterns" value="Low tissue specificity"/>
</dbReference>
<dbReference type="MalaCards" id="NR1H3"/>
<dbReference type="MIM" id="602423">
    <property type="type" value="gene"/>
</dbReference>
<dbReference type="neXtProt" id="NX_Q13133"/>
<dbReference type="OpenTargets" id="ENSG00000025434"/>
<dbReference type="PharmGKB" id="PA31751"/>
<dbReference type="VEuPathDB" id="HostDB:ENSG00000025434"/>
<dbReference type="eggNOG" id="KOG3575">
    <property type="taxonomic scope" value="Eukaryota"/>
</dbReference>
<dbReference type="GeneTree" id="ENSGT00940000159068"/>
<dbReference type="InParanoid" id="Q13133"/>
<dbReference type="OMA" id="PETTCAI"/>
<dbReference type="OrthoDB" id="5837785at2759"/>
<dbReference type="PAN-GO" id="Q13133">
    <property type="GO annotations" value="6 GO annotations based on evolutionary models"/>
</dbReference>
<dbReference type="PhylomeDB" id="Q13133"/>
<dbReference type="TreeFam" id="TF352167"/>
<dbReference type="PathwayCommons" id="Q13133"/>
<dbReference type="Reactome" id="R-HSA-1989781">
    <property type="pathway name" value="PPARA activates gene expression"/>
</dbReference>
<dbReference type="Reactome" id="R-HSA-383280">
    <property type="pathway name" value="Nuclear Receptor transcription pathway"/>
</dbReference>
<dbReference type="Reactome" id="R-HSA-4090294">
    <molecule id="Q13133-1"/>
    <property type="pathway name" value="SUMOylation of intracellular receptors"/>
</dbReference>
<dbReference type="Reactome" id="R-HSA-8866427">
    <property type="pathway name" value="VLDLR internalisation and degradation"/>
</dbReference>
<dbReference type="Reactome" id="R-HSA-9029558">
    <property type="pathway name" value="NR1H2 &amp; NR1H3 regulate gene expression linked to lipogenesis"/>
</dbReference>
<dbReference type="Reactome" id="R-HSA-9029569">
    <property type="pathway name" value="NR1H3 &amp; NR1H2 regulate gene expression linked to cholesterol transport and efflux"/>
</dbReference>
<dbReference type="Reactome" id="R-HSA-9031525">
    <property type="pathway name" value="NR1H2 &amp; NR1H3 regulate gene expression to limit cholesterol uptake"/>
</dbReference>
<dbReference type="Reactome" id="R-HSA-9031528">
    <property type="pathway name" value="NR1H2 &amp; NR1H3 regulate gene expression linked to triglyceride lipolysis in adipose"/>
</dbReference>
<dbReference type="Reactome" id="R-HSA-9623433">
    <property type="pathway name" value="NR1H2 &amp; NR1H3 regulate gene expression to control bile acid homeostasis"/>
</dbReference>
<dbReference type="Reactome" id="R-HSA-9632974">
    <property type="pathway name" value="NR1H2 &amp; NR1H3 regulate gene expression linked to gluconeogenesis"/>
</dbReference>
<dbReference type="SABIO-RK" id="Q13133"/>
<dbReference type="SignaLink" id="Q13133"/>
<dbReference type="SIGNOR" id="Q13133"/>
<dbReference type="BioGRID-ORCS" id="10062">
    <property type="hits" value="26 hits in 1188 CRISPR screens"/>
</dbReference>
<dbReference type="EvolutionaryTrace" id="Q13133"/>
<dbReference type="GeneWiki" id="Liver_X_receptor_alpha"/>
<dbReference type="GenomeRNAi" id="10062"/>
<dbReference type="Pharos" id="Q13133">
    <property type="development level" value="Tchem"/>
</dbReference>
<dbReference type="PRO" id="PR:Q13133"/>
<dbReference type="Proteomes" id="UP000005640">
    <property type="component" value="Chromosome 11"/>
</dbReference>
<dbReference type="RNAct" id="Q13133">
    <property type="molecule type" value="protein"/>
</dbReference>
<dbReference type="Bgee" id="ENSG00000025434">
    <property type="expression patterns" value="Expressed in right lobe of liver and 139 other cell types or tissues"/>
</dbReference>
<dbReference type="ExpressionAtlas" id="Q13133">
    <property type="expression patterns" value="baseline and differential"/>
</dbReference>
<dbReference type="GO" id="GO:0000785">
    <property type="term" value="C:chromatin"/>
    <property type="evidence" value="ECO:0000314"/>
    <property type="project" value="BHF-UCL"/>
</dbReference>
<dbReference type="GO" id="GO:0005737">
    <property type="term" value="C:cytoplasm"/>
    <property type="evidence" value="ECO:0000250"/>
    <property type="project" value="UniProtKB"/>
</dbReference>
<dbReference type="GO" id="GO:0005829">
    <property type="term" value="C:cytosol"/>
    <property type="evidence" value="ECO:0000314"/>
    <property type="project" value="HPA"/>
</dbReference>
<dbReference type="GO" id="GO:0005654">
    <property type="term" value="C:nucleoplasm"/>
    <property type="evidence" value="ECO:0000314"/>
    <property type="project" value="HPA"/>
</dbReference>
<dbReference type="GO" id="GO:0005634">
    <property type="term" value="C:nucleus"/>
    <property type="evidence" value="ECO:0000314"/>
    <property type="project" value="UniProtKB"/>
</dbReference>
<dbReference type="GO" id="GO:0043235">
    <property type="term" value="C:receptor complex"/>
    <property type="evidence" value="ECO:0000314"/>
    <property type="project" value="BHF-UCL"/>
</dbReference>
<dbReference type="GO" id="GO:0090575">
    <property type="term" value="C:RNA polymerase II transcription regulator complex"/>
    <property type="evidence" value="ECO:0000314"/>
    <property type="project" value="BHF-UCL"/>
</dbReference>
<dbReference type="GO" id="GO:0015485">
    <property type="term" value="F:cholesterol binding"/>
    <property type="evidence" value="ECO:0000304"/>
    <property type="project" value="BHF-UCL"/>
</dbReference>
<dbReference type="GO" id="GO:0031490">
    <property type="term" value="F:chromatin DNA binding"/>
    <property type="evidence" value="ECO:0007669"/>
    <property type="project" value="Ensembl"/>
</dbReference>
<dbReference type="GO" id="GO:0003677">
    <property type="term" value="F:DNA binding"/>
    <property type="evidence" value="ECO:0000304"/>
    <property type="project" value="ProtInc"/>
</dbReference>
<dbReference type="GO" id="GO:0001228">
    <property type="term" value="F:DNA-binding transcription activator activity, RNA polymerase II-specific"/>
    <property type="evidence" value="ECO:0007669"/>
    <property type="project" value="Ensembl"/>
</dbReference>
<dbReference type="GO" id="GO:0000981">
    <property type="term" value="F:DNA-binding transcription factor activity, RNA polymerase II-specific"/>
    <property type="evidence" value="ECO:0000247"/>
    <property type="project" value="NTNU_SB"/>
</dbReference>
<dbReference type="GO" id="GO:0004879">
    <property type="term" value="F:nuclear receptor activity"/>
    <property type="evidence" value="ECO:0000314"/>
    <property type="project" value="GO_Central"/>
</dbReference>
<dbReference type="GO" id="GO:0000978">
    <property type="term" value="F:RNA polymerase II cis-regulatory region sequence-specific DNA binding"/>
    <property type="evidence" value="ECO:0000318"/>
    <property type="project" value="GO_Central"/>
</dbReference>
<dbReference type="GO" id="GO:0032810">
    <property type="term" value="F:sterol response element binding"/>
    <property type="evidence" value="ECO:0000314"/>
    <property type="project" value="UniProtKB"/>
</dbReference>
<dbReference type="GO" id="GO:0000976">
    <property type="term" value="F:transcription cis-regulatory region binding"/>
    <property type="evidence" value="ECO:0000314"/>
    <property type="project" value="BHF-UCL"/>
</dbReference>
<dbReference type="GO" id="GO:0008270">
    <property type="term" value="F:zinc ion binding"/>
    <property type="evidence" value="ECO:0007669"/>
    <property type="project" value="UniProtKB-KW"/>
</dbReference>
<dbReference type="GO" id="GO:0043277">
    <property type="term" value="P:apoptotic cell clearance"/>
    <property type="evidence" value="ECO:0000315"/>
    <property type="project" value="UniProtKB"/>
</dbReference>
<dbReference type="GO" id="GO:0030154">
    <property type="term" value="P:cell differentiation"/>
    <property type="evidence" value="ECO:0000318"/>
    <property type="project" value="GO_Central"/>
</dbReference>
<dbReference type="GO" id="GO:0071222">
    <property type="term" value="P:cellular response to lipopolysaccharide"/>
    <property type="evidence" value="ECO:0000314"/>
    <property type="project" value="BHF-UCL"/>
</dbReference>
<dbReference type="GO" id="GO:0042632">
    <property type="term" value="P:cholesterol homeostasis"/>
    <property type="evidence" value="ECO:0000314"/>
    <property type="project" value="BHF-UCL"/>
</dbReference>
<dbReference type="GO" id="GO:0009755">
    <property type="term" value="P:hormone-mediated signaling pathway"/>
    <property type="evidence" value="ECO:0000314"/>
    <property type="project" value="ComplexPortal"/>
</dbReference>
<dbReference type="GO" id="GO:0030522">
    <property type="term" value="P:intracellular receptor signaling pathway"/>
    <property type="evidence" value="ECO:0000318"/>
    <property type="project" value="GO_Central"/>
</dbReference>
<dbReference type="GO" id="GO:0055088">
    <property type="term" value="P:lipid homeostasis"/>
    <property type="evidence" value="ECO:0000250"/>
    <property type="project" value="BHF-UCL"/>
</dbReference>
<dbReference type="GO" id="GO:0042789">
    <property type="term" value="P:mRNA transcription by RNA polymerase II"/>
    <property type="evidence" value="ECO:0000314"/>
    <property type="project" value="ComplexPortal"/>
</dbReference>
<dbReference type="GO" id="GO:0010887">
    <property type="term" value="P:negative regulation of cholesterol storage"/>
    <property type="evidence" value="ECO:0000315"/>
    <property type="project" value="BHF-UCL"/>
</dbReference>
<dbReference type="GO" id="GO:0120163">
    <property type="term" value="P:negative regulation of cold-induced thermogenesis"/>
    <property type="evidence" value="ECO:0000250"/>
    <property type="project" value="YuBioLab"/>
</dbReference>
<dbReference type="GO" id="GO:0050728">
    <property type="term" value="P:negative regulation of inflammatory response"/>
    <property type="evidence" value="ECO:0000250"/>
    <property type="project" value="BHF-UCL"/>
</dbReference>
<dbReference type="GO" id="GO:0032369">
    <property type="term" value="P:negative regulation of lipid transport"/>
    <property type="evidence" value="ECO:0000315"/>
    <property type="project" value="BHF-UCL"/>
</dbReference>
<dbReference type="GO" id="GO:0043031">
    <property type="term" value="P:negative regulation of macrophage activation"/>
    <property type="evidence" value="ECO:0000250"/>
    <property type="project" value="BHF-UCL"/>
</dbReference>
<dbReference type="GO" id="GO:0010745">
    <property type="term" value="P:negative regulation of macrophage derived foam cell differentiation"/>
    <property type="evidence" value="ECO:0000305"/>
    <property type="project" value="BHF-UCL"/>
</dbReference>
<dbReference type="GO" id="GO:0090188">
    <property type="term" value="P:negative regulation of pancreatic juice secretion"/>
    <property type="evidence" value="ECO:0000250"/>
    <property type="project" value="BHF-UCL"/>
</dbReference>
<dbReference type="GO" id="GO:0048550">
    <property type="term" value="P:negative regulation of pinocytosis"/>
    <property type="evidence" value="ECO:0000315"/>
    <property type="project" value="BHF-UCL"/>
</dbReference>
<dbReference type="GO" id="GO:0045861">
    <property type="term" value="P:negative regulation of proteolysis"/>
    <property type="evidence" value="ECO:0007669"/>
    <property type="project" value="Ensembl"/>
</dbReference>
<dbReference type="GO" id="GO:1903573">
    <property type="term" value="P:negative regulation of response to endoplasmic reticulum stress"/>
    <property type="evidence" value="ECO:0000250"/>
    <property type="project" value="UniProtKB"/>
</dbReference>
<dbReference type="GO" id="GO:0090341">
    <property type="term" value="P:negative regulation of secretion of lysosomal enzymes"/>
    <property type="evidence" value="ECO:0000250"/>
    <property type="project" value="BHF-UCL"/>
</dbReference>
<dbReference type="GO" id="GO:0000122">
    <property type="term" value="P:negative regulation of transcription by RNA polymerase II"/>
    <property type="evidence" value="ECO:0000250"/>
    <property type="project" value="BHF-UCL"/>
</dbReference>
<dbReference type="GO" id="GO:0060336">
    <property type="term" value="P:negative regulation of type II interferon-mediated signaling pathway"/>
    <property type="evidence" value="ECO:0000303"/>
    <property type="project" value="BHF-UCL"/>
</dbReference>
<dbReference type="GO" id="GO:0036151">
    <property type="term" value="P:phosphatidylcholine acyl-chain remodeling"/>
    <property type="evidence" value="ECO:0000250"/>
    <property type="project" value="UniProtKB"/>
</dbReference>
<dbReference type="GO" id="GO:0010875">
    <property type="term" value="P:positive regulation of cholesterol efflux"/>
    <property type="evidence" value="ECO:0000314"/>
    <property type="project" value="UniProtKB"/>
</dbReference>
<dbReference type="GO" id="GO:0032376">
    <property type="term" value="P:positive regulation of cholesterol transport"/>
    <property type="evidence" value="ECO:0000314"/>
    <property type="project" value="BHF-UCL"/>
</dbReference>
<dbReference type="GO" id="GO:0045893">
    <property type="term" value="P:positive regulation of DNA-templated transcription"/>
    <property type="evidence" value="ECO:0000314"/>
    <property type="project" value="UniProtKB"/>
</dbReference>
<dbReference type="GO" id="GO:0045723">
    <property type="term" value="P:positive regulation of fatty acid biosynthetic process"/>
    <property type="evidence" value="ECO:0000315"/>
    <property type="project" value="BHF-UCL"/>
</dbReference>
<dbReference type="GO" id="GO:0046889">
    <property type="term" value="P:positive regulation of lipid biosynthetic process"/>
    <property type="evidence" value="ECO:0000314"/>
    <property type="project" value="BHF-UCL"/>
</dbReference>
<dbReference type="GO" id="GO:0034145">
    <property type="term" value="P:positive regulation of toll-like receptor 4 signaling pathway"/>
    <property type="evidence" value="ECO:0000314"/>
    <property type="project" value="BHF-UCL"/>
</dbReference>
<dbReference type="GO" id="GO:0045944">
    <property type="term" value="P:positive regulation of transcription by RNA polymerase II"/>
    <property type="evidence" value="ECO:0000314"/>
    <property type="project" value="UniProtKB"/>
</dbReference>
<dbReference type="GO" id="GO:0010867">
    <property type="term" value="P:positive regulation of triglyceride biosynthetic process"/>
    <property type="evidence" value="ECO:0000315"/>
    <property type="project" value="BHF-UCL"/>
</dbReference>
<dbReference type="GO" id="GO:0042752">
    <property type="term" value="P:regulation of circadian rhythm"/>
    <property type="evidence" value="ECO:0000304"/>
    <property type="project" value="BHF-UCL"/>
</dbReference>
<dbReference type="GO" id="GO:0010883">
    <property type="term" value="P:regulation of lipid storage"/>
    <property type="evidence" value="ECO:0000318"/>
    <property type="project" value="GO_Central"/>
</dbReference>
<dbReference type="GO" id="GO:0032570">
    <property type="term" value="P:response to progesterone"/>
    <property type="evidence" value="ECO:0000314"/>
    <property type="project" value="BHF-UCL"/>
</dbReference>
<dbReference type="GO" id="GO:0055092">
    <property type="term" value="P:sterol homeostasis"/>
    <property type="evidence" value="ECO:0000250"/>
    <property type="project" value="BHF-UCL"/>
</dbReference>
<dbReference type="GO" id="GO:0070328">
    <property type="term" value="P:triglyceride homeostasis"/>
    <property type="evidence" value="ECO:0000250"/>
    <property type="project" value="BHF-UCL"/>
</dbReference>
<dbReference type="CDD" id="cd07160">
    <property type="entry name" value="NR_DBD_LXR"/>
    <property type="match status" value="1"/>
</dbReference>
<dbReference type="CDD" id="cd06954">
    <property type="entry name" value="NR_LBD_LXR"/>
    <property type="match status" value="1"/>
</dbReference>
<dbReference type="FunFam" id="1.10.565.10:FF:000014">
    <property type="entry name" value="Oxysterols receptor LXR-alpha isoform 1"/>
    <property type="match status" value="1"/>
</dbReference>
<dbReference type="FunFam" id="3.30.50.10:FF:000017">
    <property type="entry name" value="Oxysterols receptor LXR-alpha isoform 1"/>
    <property type="match status" value="1"/>
</dbReference>
<dbReference type="Gene3D" id="3.30.50.10">
    <property type="entry name" value="Erythroid Transcription Factor GATA-1, subunit A"/>
    <property type="match status" value="1"/>
</dbReference>
<dbReference type="Gene3D" id="1.10.565.10">
    <property type="entry name" value="Retinoid X Receptor"/>
    <property type="match status" value="1"/>
</dbReference>
<dbReference type="IDEAL" id="IID00243"/>
<dbReference type="InterPro" id="IPR023257">
    <property type="entry name" value="Liver_X_rcpt"/>
</dbReference>
<dbReference type="InterPro" id="IPR035500">
    <property type="entry name" value="NHR-like_dom_sf"/>
</dbReference>
<dbReference type="InterPro" id="IPR000536">
    <property type="entry name" value="Nucl_hrmn_rcpt_lig-bd"/>
</dbReference>
<dbReference type="InterPro" id="IPR050234">
    <property type="entry name" value="Nuclear_hormone_rcpt_NR1"/>
</dbReference>
<dbReference type="InterPro" id="IPR001723">
    <property type="entry name" value="Nuclear_hrmn_rcpt"/>
</dbReference>
<dbReference type="InterPro" id="IPR001628">
    <property type="entry name" value="Znf_hrmn_rcpt"/>
</dbReference>
<dbReference type="InterPro" id="IPR013088">
    <property type="entry name" value="Znf_NHR/GATA"/>
</dbReference>
<dbReference type="PANTHER" id="PTHR24082">
    <property type="entry name" value="NUCLEAR HORMONE RECEPTOR"/>
    <property type="match status" value="1"/>
</dbReference>
<dbReference type="PANTHER" id="PTHR24082:SF259">
    <property type="entry name" value="OXYSTEROLS RECEPTOR LXR-ALPHA"/>
    <property type="match status" value="1"/>
</dbReference>
<dbReference type="Pfam" id="PF00104">
    <property type="entry name" value="Hormone_recep"/>
    <property type="match status" value="1"/>
</dbReference>
<dbReference type="Pfam" id="PF00105">
    <property type="entry name" value="zf-C4"/>
    <property type="match status" value="1"/>
</dbReference>
<dbReference type="PRINTS" id="PR02034">
    <property type="entry name" value="LIVERXRECPTR"/>
</dbReference>
<dbReference type="PRINTS" id="PR00398">
    <property type="entry name" value="STRDHORMONER"/>
</dbReference>
<dbReference type="PRINTS" id="PR00047">
    <property type="entry name" value="STROIDFINGER"/>
</dbReference>
<dbReference type="SMART" id="SM00430">
    <property type="entry name" value="HOLI"/>
    <property type="match status" value="1"/>
</dbReference>
<dbReference type="SMART" id="SM00399">
    <property type="entry name" value="ZnF_C4"/>
    <property type="match status" value="1"/>
</dbReference>
<dbReference type="SUPFAM" id="SSF57716">
    <property type="entry name" value="Glucocorticoid receptor-like (DNA-binding domain)"/>
    <property type="match status" value="1"/>
</dbReference>
<dbReference type="SUPFAM" id="SSF48508">
    <property type="entry name" value="Nuclear receptor ligand-binding domain"/>
    <property type="match status" value="1"/>
</dbReference>
<dbReference type="PROSITE" id="PS51843">
    <property type="entry name" value="NR_LBD"/>
    <property type="match status" value="1"/>
</dbReference>
<dbReference type="PROSITE" id="PS00031">
    <property type="entry name" value="NUCLEAR_REC_DBD_1"/>
    <property type="match status" value="1"/>
</dbReference>
<dbReference type="PROSITE" id="PS51030">
    <property type="entry name" value="NUCLEAR_REC_DBD_2"/>
    <property type="match status" value="1"/>
</dbReference>
<keyword id="KW-0002">3D-structure</keyword>
<keyword id="KW-0010">Activator</keyword>
<keyword id="KW-0025">Alternative splicing</keyword>
<keyword id="KW-0963">Cytoplasm</keyword>
<keyword id="KW-0238">DNA-binding</keyword>
<keyword id="KW-0479">Metal-binding</keyword>
<keyword id="KW-0539">Nucleus</keyword>
<keyword id="KW-1267">Proteomics identification</keyword>
<keyword id="KW-0675">Receptor</keyword>
<keyword id="KW-1185">Reference proteome</keyword>
<keyword id="KW-0804">Transcription</keyword>
<keyword id="KW-0805">Transcription regulation</keyword>
<keyword id="KW-0832">Ubl conjugation</keyword>
<keyword id="KW-0862">Zinc</keyword>
<keyword id="KW-0863">Zinc-finger</keyword>
<name>NR1H3_HUMAN</name>
<protein>
    <recommendedName>
        <fullName>Oxysterols receptor LXR-alpha</fullName>
    </recommendedName>
    <alternativeName>
        <fullName>Liver X receptor alpha</fullName>
    </alternativeName>
    <alternativeName>
        <fullName>Nuclear receptor subfamily 1 group H member 3</fullName>
    </alternativeName>
</protein>
<gene>
    <name type="primary">NR1H3</name>
    <name type="synonym">LXRA</name>
</gene>
<feature type="chain" id="PRO_0000053535" description="Oxysterols receptor LXR-alpha">
    <location>
        <begin position="1"/>
        <end position="447"/>
    </location>
</feature>
<feature type="domain" description="NR LBD" evidence="3">
    <location>
        <begin position="209"/>
        <end position="447"/>
    </location>
</feature>
<feature type="DNA-binding region" description="Nuclear receptor" evidence="2">
    <location>
        <begin position="95"/>
        <end position="170"/>
    </location>
</feature>
<feature type="zinc finger region" description="NR C4-type" evidence="2">
    <location>
        <begin position="98"/>
        <end position="118"/>
    </location>
</feature>
<feature type="zinc finger region" description="NR C4-type" evidence="2">
    <location>
        <begin position="134"/>
        <end position="158"/>
    </location>
</feature>
<feature type="region of interest" description="Transactivation AF-1; required for ligand-independent transactivation function" evidence="6">
    <location>
        <begin position="1"/>
        <end position="96"/>
    </location>
</feature>
<feature type="region of interest" description="Disordered" evidence="4">
    <location>
        <begin position="1"/>
        <end position="37"/>
    </location>
</feature>
<feature type="region of interest" description="Disordered" evidence="4">
    <location>
        <begin position="65"/>
        <end position="88"/>
    </location>
</feature>
<feature type="region of interest" description="Disordered" evidence="4">
    <location>
        <begin position="180"/>
        <end position="202"/>
    </location>
</feature>
<feature type="region of interest" description="Transactivation AF-2; required for ligand-dependent transactivation function; mediates interaction with CCAR2" evidence="6">
    <location>
        <begin position="205"/>
        <end position="447"/>
    </location>
</feature>
<feature type="compositionally biased region" description="Low complexity" evidence="4">
    <location>
        <begin position="24"/>
        <end position="37"/>
    </location>
</feature>
<feature type="splice variant" id="VSP_044960" description="In isoform 3." evidence="8">
    <location>
        <begin position="1"/>
        <end position="45"/>
    </location>
</feature>
<feature type="splice variant" id="VSP_003664" description="In isoform 2." evidence="8">
    <location>
        <begin position="237"/>
        <end position="296"/>
    </location>
</feature>
<feature type="sequence variant" id="VAR_050580" description="In dbSNP:rs41481445.">
    <original>G</original>
    <variation>V</variation>
    <location>
        <position position="52"/>
    </location>
</feature>
<feature type="mutagenesis site" description="Abolishes interaction with NCOA2 without affecting interaction with GPS2; when associated with 438-A-A-439." evidence="5">
    <original>IVDFAK</original>
    <variation>EVDFAE</variation>
    <location>
        <begin position="268"/>
        <end position="273"/>
    </location>
</feature>
<feature type="mutagenesis site" description="Abolishes interaction with NCOA2 without affecting interaction with GPS2; when associated with 268-A--A-273." evidence="5">
    <original>LL</original>
    <variation>AA</variation>
    <location>
        <begin position="438"/>
        <end position="439"/>
    </location>
</feature>
<feature type="sequence conflict" description="In Ref. 1; AAA85856." evidence="9" ref="1">
    <original>A</original>
    <variation>R</variation>
    <location>
        <position position="196"/>
    </location>
</feature>
<feature type="helix" evidence="12">
    <location>
        <begin position="208"/>
        <end position="220"/>
    </location>
</feature>
<feature type="helix" evidence="11">
    <location>
        <begin position="229"/>
        <end position="233"/>
    </location>
</feature>
<feature type="helix" evidence="12">
    <location>
        <begin position="247"/>
        <end position="272"/>
    </location>
</feature>
<feature type="helix" evidence="12">
    <location>
        <begin position="278"/>
        <end position="280"/>
    </location>
</feature>
<feature type="helix" evidence="12">
    <location>
        <begin position="283"/>
        <end position="304"/>
    </location>
</feature>
<feature type="turn" evidence="12">
    <location>
        <begin position="308"/>
        <end position="311"/>
    </location>
</feature>
<feature type="strand" evidence="12">
    <location>
        <begin position="312"/>
        <end position="315"/>
    </location>
</feature>
<feature type="turn" evidence="12">
    <location>
        <begin position="316"/>
        <end position="318"/>
    </location>
</feature>
<feature type="strand" evidence="12">
    <location>
        <begin position="319"/>
        <end position="321"/>
    </location>
</feature>
<feature type="helix" evidence="12">
    <location>
        <begin position="323"/>
        <end position="328"/>
    </location>
</feature>
<feature type="helix" evidence="12">
    <location>
        <begin position="333"/>
        <end position="349"/>
    </location>
</feature>
<feature type="helix" evidence="12">
    <location>
        <begin position="353"/>
        <end position="364"/>
    </location>
</feature>
<feature type="strand" evidence="10">
    <location>
        <begin position="369"/>
        <end position="371"/>
    </location>
</feature>
<feature type="helix" evidence="12">
    <location>
        <begin position="375"/>
        <end position="396"/>
    </location>
</feature>
<feature type="helix" evidence="12">
    <location>
        <begin position="403"/>
        <end position="430"/>
    </location>
</feature>
<feature type="helix" evidence="12">
    <location>
        <begin position="437"/>
        <end position="443"/>
    </location>
</feature>
<comment type="function">
    <text evidence="1 5 6 7">Nuclear receptor that exhibits a ligand-dependent transcriptional activation activity (PubMed:19481530, PubMed:25661920, PubMed:37478846). Interaction with retinoic acid receptor (RXR) shifts RXR from its role as a silent DNA-binding partner to an active ligand-binding subunit in mediating retinoid responses through target genes defined by LXRES (PubMed:37478846). LXRES are DR4-type response elements characterized by direct repeats of two similar hexanuclotide half-sites spaced by four nucleotides (By similarity). Plays an important role in the regulation of cholesterol homeostasis, regulating cholesterol uptake through MYLIP-dependent ubiquitination of LDLR, VLDLR and LRP8 (PubMed:19481530). Interplays functionally with RORA for the regulation of genes involved in liver metabolism (By similarity). Induces LPCAT3-dependent phospholipid remodeling in endoplasmic reticulum (ER) membranes of hepatocytes, driving SREBF1 processing and lipogenesis (By similarity). Via LPCAT3, triggers the incorporation of arachidonate into phosphatidylcholines of ER membranes, increasing membrane dynamics and enabling triacylglycerols transfer to nascent very low-density lipoprotein (VLDL) particles. Via LPCAT3 also counteracts lipid-induced ER stress response and inflammation, likely by modulating SRC kinase membrane compartmentalization and limiting the synthesis of lipid inflammatory mediators (By similarity).</text>
</comment>
<comment type="subunit">
    <text evidence="5 6">Heterodimer of NR1H3 and RXR (retinoic acid receptor). Interacts with CCAR2 (via N-terminus) in a ligand-independent manner. Interacts with SIRT1 and this interaction is inhibited by CCAR2 (PubMed:25661920). Interacts with GPS2 (PubMed:19481530).</text>
</comment>
<comment type="interaction">
    <interactant intactId="EBI-781356">
        <id>Q13133</id>
    </interactant>
    <interactant intactId="EBI-781301">
        <id>O60869</id>
        <label>EDF1</label>
    </interactant>
    <organismsDiffer>false</organismsDiffer>
    <experiments>4</experiments>
</comment>
<comment type="interaction">
    <interactant intactId="EBI-781356">
        <id>Q13133</id>
    </interactant>
    <interactant intactId="EBI-710124">
        <id>O60341</id>
        <label>KDM1A</label>
    </interactant>
    <organismsDiffer>false</organismsDiffer>
    <experiments>2</experiments>
</comment>
<comment type="interaction">
    <interactant intactId="EBI-781356">
        <id>Q13133</id>
    </interactant>
    <interactant intactId="EBI-724076">
        <id>Q99750</id>
        <label>MDFI</label>
    </interactant>
    <organismsDiffer>false</organismsDiffer>
    <experiments>3</experiments>
</comment>
<comment type="interaction">
    <interactant intactId="EBI-781356">
        <id>Q13133</id>
    </interactant>
    <interactant intactId="EBI-455189">
        <id>Q15788</id>
        <label>NCOA1</label>
    </interactant>
    <organismsDiffer>false</organismsDiffer>
    <experiments>15</experiments>
</comment>
<comment type="interaction">
    <interactant intactId="EBI-781356">
        <id>Q13133</id>
    </interactant>
    <interactant intactId="EBI-347233">
        <id>O75376</id>
        <label>NCOR1</label>
    </interactant>
    <organismsDiffer>false</organismsDiffer>
    <experiments>3</experiments>
</comment>
<comment type="interaction">
    <interactant intactId="EBI-781356">
        <id>Q13133</id>
    </interactant>
    <interactant intactId="EBI-78615">
        <id>Q07869</id>
        <label>PPARA</label>
    </interactant>
    <organismsDiffer>false</organismsDiffer>
    <experiments>5</experiments>
</comment>
<comment type="interaction">
    <interactant intactId="EBI-781356">
        <id>Q13133</id>
    </interactant>
    <interactant intactId="EBI-21458428">
        <id>Q07869-1</id>
        <label>PPARA</label>
    </interactant>
    <organismsDiffer>false</organismsDiffer>
    <experiments>2</experiments>
</comment>
<comment type="interaction">
    <interactant intactId="EBI-781356">
        <id>Q13133</id>
    </interactant>
    <interactant intactId="EBI-6426768">
        <id>Q03181</id>
        <label>PPARD</label>
    </interactant>
    <organismsDiffer>false</organismsDiffer>
    <experiments>2</experiments>
</comment>
<comment type="interaction">
    <interactant intactId="EBI-781356">
        <id>Q13133</id>
    </interactant>
    <interactant intactId="EBI-781384">
        <id>P37231</id>
        <label>PPARG</label>
    </interactant>
    <organismsDiffer>false</organismsDiffer>
    <experiments>2</experiments>
</comment>
<comment type="interaction">
    <interactant intactId="EBI-781356">
        <id>Q13133</id>
    </interactant>
    <interactant intactId="EBI-78598">
        <id>P19793</id>
        <label>RXRA</label>
    </interactant>
    <organismsDiffer>false</organismsDiffer>
    <experiments>8</experiments>
</comment>
<comment type="interaction">
    <interactant intactId="EBI-781356">
        <id>Q13133</id>
    </interactant>
    <interactant intactId="EBI-748576">
        <id>P28702</id>
        <label>RXRB</label>
    </interactant>
    <organismsDiffer>false</organismsDiffer>
    <experiments>4</experiments>
</comment>
<comment type="interaction">
    <interactant intactId="EBI-781356">
        <id>Q13133</id>
    </interactant>
    <interactant intactId="EBI-712405">
        <id>P48443</id>
        <label>RXRG</label>
    </interactant>
    <organismsDiffer>false</organismsDiffer>
    <experiments>7</experiments>
</comment>
<comment type="interaction">
    <interactant intactId="EBI-781356">
        <id>Q13133</id>
    </interactant>
    <interactant intactId="EBI-349968">
        <id>O43463</id>
        <label>SUV39H1</label>
    </interactant>
    <organismsDiffer>false</organismsDiffer>
    <experiments>2</experiments>
</comment>
<comment type="interaction">
    <interactant intactId="EBI-12699353">
        <id>Q13133-2</id>
    </interactant>
    <interactant intactId="EBI-466029">
        <id>P42858</id>
        <label>HTT</label>
    </interactant>
    <organismsDiffer>false</organismsDiffer>
    <experiments>3</experiments>
</comment>
<comment type="interaction">
    <interactant intactId="EBI-12699353">
        <id>Q13133-2</id>
    </interactant>
    <interactant intactId="EBI-724076">
        <id>Q99750</id>
        <label>MDFI</label>
    </interactant>
    <organismsDiffer>false</organismsDiffer>
    <experiments>3</experiments>
</comment>
<comment type="interaction">
    <interactant intactId="EBI-11952806">
        <id>Q13133-3</id>
    </interactant>
    <interactant intactId="EBI-747185">
        <id>O95817</id>
        <label>BAG3</label>
    </interactant>
    <organismsDiffer>false</organismsDiffer>
    <experiments>3</experiments>
</comment>
<comment type="interaction">
    <interactant intactId="EBI-11952806">
        <id>Q13133-3</id>
    </interactant>
    <interactant intactId="EBI-10976677">
        <id>G5E9A7</id>
        <label>DMWD</label>
    </interactant>
    <organismsDiffer>false</organismsDiffer>
    <experiments>3</experiments>
</comment>
<comment type="interaction">
    <interactant intactId="EBI-11952806">
        <id>Q13133-3</id>
    </interactant>
    <interactant intactId="EBI-751540">
        <id>O95872</id>
        <label>GPANK1</label>
    </interactant>
    <organismsDiffer>false</organismsDiffer>
    <experiments>3</experiments>
</comment>
<comment type="interaction">
    <interactant intactId="EBI-11952806">
        <id>Q13133-3</id>
    </interactant>
    <interactant intactId="EBI-351935">
        <id>P02545</id>
        <label>LMNA</label>
    </interactant>
    <organismsDiffer>false</organismsDiffer>
    <experiments>3</experiments>
</comment>
<comment type="interaction">
    <interactant intactId="EBI-11952806">
        <id>Q13133-3</id>
    </interactant>
    <interactant intactId="EBI-724076">
        <id>Q99750</id>
        <label>MDFI</label>
    </interactant>
    <organismsDiffer>false</organismsDiffer>
    <experiments>3</experiments>
</comment>
<comment type="interaction">
    <interactant intactId="EBI-11952806">
        <id>Q13133-3</id>
    </interactant>
    <interactant intactId="EBI-748576">
        <id>P28702</id>
        <label>RXRB</label>
    </interactant>
    <organismsDiffer>false</organismsDiffer>
    <experiments>6</experiments>
</comment>
<comment type="interaction">
    <interactant intactId="EBI-11952806">
        <id>Q13133-3</id>
    </interactant>
    <interactant intactId="EBI-16429492">
        <id>P28702-3</id>
        <label>RXRB</label>
    </interactant>
    <organismsDiffer>false</organismsDiffer>
    <experiments>3</experiments>
</comment>
<comment type="interaction">
    <interactant intactId="EBI-11952806">
        <id>Q13133-3</id>
    </interactant>
    <interactant intactId="EBI-712405">
        <id>P48443</id>
        <label>RXRG</label>
    </interactant>
    <organismsDiffer>false</organismsDiffer>
    <experiments>11</experiments>
</comment>
<comment type="interaction">
    <interactant intactId="EBI-11952806">
        <id>Q13133-3</id>
    </interactant>
    <interactant intactId="EBI-5235340">
        <id>Q7Z699</id>
        <label>SPRED1</label>
    </interactant>
    <organismsDiffer>false</organismsDiffer>
    <experiments>3</experiments>
</comment>
<comment type="subcellular location">
    <subcellularLocation>
        <location evidence="2 6">Nucleus</location>
    </subcellularLocation>
    <subcellularLocation>
        <location evidence="1">Cytoplasm</location>
    </subcellularLocation>
</comment>
<comment type="alternative products">
    <event type="alternative splicing"/>
    <isoform>
        <id>Q13133-1</id>
        <name>1</name>
        <sequence type="displayed"/>
    </isoform>
    <isoform>
        <id>Q13133-2</id>
        <name>2</name>
        <sequence type="described" ref="VSP_003664"/>
    </isoform>
    <isoform>
        <id>Q13133-3</id>
        <name>3</name>
        <sequence type="described" ref="VSP_044960"/>
    </isoform>
</comment>
<comment type="tissue specificity">
    <text>Visceral organs specific expression. Strong expression was found in liver, kidney and intestine followed by spleen and to a lesser extent the adrenals.</text>
</comment>
<comment type="induction">
    <text>By 9-cis retinoic acid (9CRA).</text>
</comment>
<comment type="PTM">
    <text evidence="7">Ubiquitinated by UBR5, leading to its degradation: UBR5 specifically recognizes and binds ligand-bound NR1H3 when it is not associated with coactivators (NCOAs) (PubMed:37478846). In presence of NCOAs, the UBR5-degron is not accessible, preventing its ubiquitination and degradation (PubMed:37478846).</text>
</comment>
<comment type="similarity">
    <text evidence="9">Belongs to the nuclear hormone receptor family. NR1 subfamily.</text>
</comment>
<organism>
    <name type="scientific">Homo sapiens</name>
    <name type="common">Human</name>
    <dbReference type="NCBI Taxonomy" id="9606"/>
    <lineage>
        <taxon>Eukaryota</taxon>
        <taxon>Metazoa</taxon>
        <taxon>Chordata</taxon>
        <taxon>Craniata</taxon>
        <taxon>Vertebrata</taxon>
        <taxon>Euteleostomi</taxon>
        <taxon>Mammalia</taxon>
        <taxon>Eutheria</taxon>
        <taxon>Euarchontoglires</taxon>
        <taxon>Primates</taxon>
        <taxon>Haplorrhini</taxon>
        <taxon>Catarrhini</taxon>
        <taxon>Hominidae</taxon>
        <taxon>Homo</taxon>
    </lineage>
</organism>
<accession>Q13133</accession>
<accession>A8K3J9</accession>
<accession>D3DQR1</accession>
<accession>Q8IW13</accession>
<accession>Q96H87</accession>
<sequence length="447" mass="50396">MSLWLGAPVPDIPPDSAVELWKPGAQDASSQAQGGSSCILREEARMPHSAGGTAGVGLEAAEPTALLTRAEPPSEPTEIRPQKRKKGPAPKMLGNELCSVCGDKASGFHYNVLSCEGCKGFFRRSVIKGAHYICHSGGHCPMDTYMRRKCQECRLRKCRQAGMREECVLSEEQIRLKKLKRQEEEQAHATSLPPRASSPPQILPQLSPEQLGMIEKLVAAQQQCNRRSFSDRLRVTPWPMAPDPHSREARQQRFAHFTELAIVSVQEIVDFAKQLPGFLQLSREDQIALLKTSAIEVMLLETSRRYNPGSESITFLKDFSYNREDFAKAGLQVEFINPIFEFSRAMNELQLNDAEFALLIAISIFSADRPNVQDQLQVERLQHTYVEALHAYVSIHHPHDRLMFPRMLMKLVSLRTLSSVHSEQVFALRLQDKKLPPLLSEIWDVHE</sequence>
<proteinExistence type="evidence at protein level"/>